<reference key="1">
    <citation type="journal article" date="2005" name="Proc. Natl. Acad. Sci. U.S.A.">
        <title>The psychrophilic lifestyle as revealed by the genome sequence of Colwellia psychrerythraea 34H through genomic and proteomic analyses.</title>
        <authorList>
            <person name="Methe B.A."/>
            <person name="Nelson K.E."/>
            <person name="Deming J.W."/>
            <person name="Momen B."/>
            <person name="Melamud E."/>
            <person name="Zhang X."/>
            <person name="Moult J."/>
            <person name="Madupu R."/>
            <person name="Nelson W.C."/>
            <person name="Dodson R.J."/>
            <person name="Brinkac L.M."/>
            <person name="Daugherty S.C."/>
            <person name="Durkin A.S."/>
            <person name="DeBoy R.T."/>
            <person name="Kolonay J.F."/>
            <person name="Sullivan S.A."/>
            <person name="Zhou L."/>
            <person name="Davidsen T.M."/>
            <person name="Wu M."/>
            <person name="Huston A.L."/>
            <person name="Lewis M."/>
            <person name="Weaver B."/>
            <person name="Weidman J.F."/>
            <person name="Khouri H."/>
            <person name="Utterback T.R."/>
            <person name="Feldblyum T.V."/>
            <person name="Fraser C.M."/>
        </authorList>
    </citation>
    <scope>NUCLEOTIDE SEQUENCE [LARGE SCALE GENOMIC DNA]</scope>
    <source>
        <strain>34H / ATCC BAA-681</strain>
    </source>
</reference>
<gene>
    <name evidence="1" type="primary">mraY</name>
    <name type="ordered locus">CPS_4468</name>
</gene>
<accession>Q47VQ6</accession>
<dbReference type="EC" id="2.7.8.13" evidence="1"/>
<dbReference type="EMBL" id="CP000083">
    <property type="protein sequence ID" value="AAZ25617.1"/>
    <property type="molecule type" value="Genomic_DNA"/>
</dbReference>
<dbReference type="RefSeq" id="WP_011045197.1">
    <property type="nucleotide sequence ID" value="NC_003910.7"/>
</dbReference>
<dbReference type="SMR" id="Q47VQ6"/>
<dbReference type="STRING" id="167879.CPS_4468"/>
<dbReference type="KEGG" id="cps:CPS_4468"/>
<dbReference type="eggNOG" id="COG0472">
    <property type="taxonomic scope" value="Bacteria"/>
</dbReference>
<dbReference type="HOGENOM" id="CLU_023982_0_0_6"/>
<dbReference type="UniPathway" id="UPA00219"/>
<dbReference type="Proteomes" id="UP000000547">
    <property type="component" value="Chromosome"/>
</dbReference>
<dbReference type="GO" id="GO:0005886">
    <property type="term" value="C:plasma membrane"/>
    <property type="evidence" value="ECO:0007669"/>
    <property type="project" value="UniProtKB-SubCell"/>
</dbReference>
<dbReference type="GO" id="GO:0046872">
    <property type="term" value="F:metal ion binding"/>
    <property type="evidence" value="ECO:0007669"/>
    <property type="project" value="UniProtKB-KW"/>
</dbReference>
<dbReference type="GO" id="GO:0008963">
    <property type="term" value="F:phospho-N-acetylmuramoyl-pentapeptide-transferase activity"/>
    <property type="evidence" value="ECO:0007669"/>
    <property type="project" value="UniProtKB-UniRule"/>
</dbReference>
<dbReference type="GO" id="GO:0051992">
    <property type="term" value="F:UDP-N-acetylmuramoyl-L-alanyl-D-glutamyl-meso-2,6-diaminopimelyl-D-alanyl-D-alanine:undecaprenyl-phosphate transferase activity"/>
    <property type="evidence" value="ECO:0007669"/>
    <property type="project" value="RHEA"/>
</dbReference>
<dbReference type="GO" id="GO:0051301">
    <property type="term" value="P:cell division"/>
    <property type="evidence" value="ECO:0007669"/>
    <property type="project" value="UniProtKB-KW"/>
</dbReference>
<dbReference type="GO" id="GO:0071555">
    <property type="term" value="P:cell wall organization"/>
    <property type="evidence" value="ECO:0007669"/>
    <property type="project" value="UniProtKB-KW"/>
</dbReference>
<dbReference type="GO" id="GO:0009252">
    <property type="term" value="P:peptidoglycan biosynthetic process"/>
    <property type="evidence" value="ECO:0007669"/>
    <property type="project" value="UniProtKB-UniRule"/>
</dbReference>
<dbReference type="GO" id="GO:0008360">
    <property type="term" value="P:regulation of cell shape"/>
    <property type="evidence" value="ECO:0007669"/>
    <property type="project" value="UniProtKB-KW"/>
</dbReference>
<dbReference type="CDD" id="cd06852">
    <property type="entry name" value="GT_MraY"/>
    <property type="match status" value="1"/>
</dbReference>
<dbReference type="HAMAP" id="MF_00038">
    <property type="entry name" value="MraY"/>
    <property type="match status" value="1"/>
</dbReference>
<dbReference type="InterPro" id="IPR000715">
    <property type="entry name" value="Glycosyl_transferase_4"/>
</dbReference>
<dbReference type="InterPro" id="IPR003524">
    <property type="entry name" value="PNAcMuramoyl-5peptid_Trfase"/>
</dbReference>
<dbReference type="InterPro" id="IPR018480">
    <property type="entry name" value="PNAcMuramoyl-5peptid_Trfase_CS"/>
</dbReference>
<dbReference type="NCBIfam" id="TIGR00445">
    <property type="entry name" value="mraY"/>
    <property type="match status" value="1"/>
</dbReference>
<dbReference type="PANTHER" id="PTHR22926">
    <property type="entry name" value="PHOSPHO-N-ACETYLMURAMOYL-PENTAPEPTIDE-TRANSFERASE"/>
    <property type="match status" value="1"/>
</dbReference>
<dbReference type="PANTHER" id="PTHR22926:SF5">
    <property type="entry name" value="PHOSPHO-N-ACETYLMURAMOYL-PENTAPEPTIDE-TRANSFERASE HOMOLOG"/>
    <property type="match status" value="1"/>
</dbReference>
<dbReference type="Pfam" id="PF00953">
    <property type="entry name" value="Glycos_transf_4"/>
    <property type="match status" value="1"/>
</dbReference>
<dbReference type="Pfam" id="PF10555">
    <property type="entry name" value="MraY_sig1"/>
    <property type="match status" value="1"/>
</dbReference>
<dbReference type="PROSITE" id="PS01347">
    <property type="entry name" value="MRAY_1"/>
    <property type="match status" value="1"/>
</dbReference>
<dbReference type="PROSITE" id="PS01348">
    <property type="entry name" value="MRAY_2"/>
    <property type="match status" value="1"/>
</dbReference>
<comment type="function">
    <text evidence="1">Catalyzes the initial step of the lipid cycle reactions in the biosynthesis of the cell wall peptidoglycan: transfers peptidoglycan precursor phospho-MurNAc-pentapeptide from UDP-MurNAc-pentapeptide onto the lipid carrier undecaprenyl phosphate, yielding undecaprenyl-pyrophosphoryl-MurNAc-pentapeptide, known as lipid I.</text>
</comment>
<comment type="catalytic activity">
    <reaction evidence="1">
        <text>UDP-N-acetyl-alpha-D-muramoyl-L-alanyl-gamma-D-glutamyl-meso-2,6-diaminopimeloyl-D-alanyl-D-alanine + di-trans,octa-cis-undecaprenyl phosphate = di-trans,octa-cis-undecaprenyl diphospho-N-acetyl-alpha-D-muramoyl-L-alanyl-D-glutamyl-meso-2,6-diaminopimeloyl-D-alanyl-D-alanine + UMP</text>
        <dbReference type="Rhea" id="RHEA:28386"/>
        <dbReference type="ChEBI" id="CHEBI:57865"/>
        <dbReference type="ChEBI" id="CHEBI:60392"/>
        <dbReference type="ChEBI" id="CHEBI:61386"/>
        <dbReference type="ChEBI" id="CHEBI:61387"/>
        <dbReference type="EC" id="2.7.8.13"/>
    </reaction>
</comment>
<comment type="cofactor">
    <cofactor evidence="1">
        <name>Mg(2+)</name>
        <dbReference type="ChEBI" id="CHEBI:18420"/>
    </cofactor>
</comment>
<comment type="pathway">
    <text evidence="1">Cell wall biogenesis; peptidoglycan biosynthesis.</text>
</comment>
<comment type="subcellular location">
    <subcellularLocation>
        <location evidence="1">Cell inner membrane</location>
        <topology evidence="1">Multi-pass membrane protein</topology>
    </subcellularLocation>
</comment>
<comment type="similarity">
    <text evidence="1">Belongs to the glycosyltransferase 4 family. MraY subfamily.</text>
</comment>
<keyword id="KW-0131">Cell cycle</keyword>
<keyword id="KW-0132">Cell division</keyword>
<keyword id="KW-0997">Cell inner membrane</keyword>
<keyword id="KW-1003">Cell membrane</keyword>
<keyword id="KW-0133">Cell shape</keyword>
<keyword id="KW-0961">Cell wall biogenesis/degradation</keyword>
<keyword id="KW-0460">Magnesium</keyword>
<keyword id="KW-0472">Membrane</keyword>
<keyword id="KW-0479">Metal-binding</keyword>
<keyword id="KW-0573">Peptidoglycan synthesis</keyword>
<keyword id="KW-0808">Transferase</keyword>
<keyword id="KW-0812">Transmembrane</keyword>
<keyword id="KW-1133">Transmembrane helix</keyword>
<organism>
    <name type="scientific">Colwellia psychrerythraea (strain 34H / ATCC BAA-681)</name>
    <name type="common">Vibrio psychroerythus</name>
    <dbReference type="NCBI Taxonomy" id="167879"/>
    <lineage>
        <taxon>Bacteria</taxon>
        <taxon>Pseudomonadati</taxon>
        <taxon>Pseudomonadota</taxon>
        <taxon>Gammaproteobacteria</taxon>
        <taxon>Alteromonadales</taxon>
        <taxon>Colwelliaceae</taxon>
        <taxon>Colwellia</taxon>
    </lineage>
</organism>
<evidence type="ECO:0000255" key="1">
    <source>
        <dbReference type="HAMAP-Rule" id="MF_00038"/>
    </source>
</evidence>
<sequence>MLLWLGEYLTQFYSAFNVFSYLTFRAIISTLTALFISLYFGPKLIRYLQKMQIGQTVRDDGPESHLSKSGTPTMGGLLILASIVISVLLWADLSNIYVWVVLFVIVSFGIVGFVDDYRKVIRKDANGLIARWKYFWQTVIGLSTALFLYFIAQGPNETALLVPFVKELLPQLGIFYVVMSYFVIVGTSNAVNLTDGLDGLAIVPTIMVAGAFALFAYVTGHVNFSAYLNIPHIALTSELVIVCTAIVGAGLGFLWFNTYPAQVFMGDVGSLALGAALGVIAILVRQELVLFIMGGVFVMETVSVILQVGSYKMRGQRIFRMAPIHHHYELKGWPEPRVIVRFWIISLILVLIGLATLKLR</sequence>
<feature type="chain" id="PRO_0000235448" description="Phospho-N-acetylmuramoyl-pentapeptide-transferase">
    <location>
        <begin position="1"/>
        <end position="360"/>
    </location>
</feature>
<feature type="transmembrane region" description="Helical" evidence="1">
    <location>
        <begin position="18"/>
        <end position="38"/>
    </location>
</feature>
<feature type="transmembrane region" description="Helical" evidence="1">
    <location>
        <begin position="73"/>
        <end position="93"/>
    </location>
</feature>
<feature type="transmembrane region" description="Helical" evidence="1">
    <location>
        <begin position="94"/>
        <end position="114"/>
    </location>
</feature>
<feature type="transmembrane region" description="Helical" evidence="1">
    <location>
        <begin position="134"/>
        <end position="154"/>
    </location>
</feature>
<feature type="transmembrane region" description="Helical" evidence="1">
    <location>
        <begin position="168"/>
        <end position="188"/>
    </location>
</feature>
<feature type="transmembrane region" description="Helical" evidence="1">
    <location>
        <begin position="199"/>
        <end position="219"/>
    </location>
</feature>
<feature type="transmembrane region" description="Helical" evidence="1">
    <location>
        <begin position="239"/>
        <end position="259"/>
    </location>
</feature>
<feature type="transmembrane region" description="Helical" evidence="1">
    <location>
        <begin position="263"/>
        <end position="283"/>
    </location>
</feature>
<feature type="transmembrane region" description="Helical" evidence="1">
    <location>
        <begin position="288"/>
        <end position="308"/>
    </location>
</feature>
<feature type="transmembrane region" description="Helical" evidence="1">
    <location>
        <begin position="338"/>
        <end position="358"/>
    </location>
</feature>
<name>MRAY_COLP3</name>
<protein>
    <recommendedName>
        <fullName evidence="1">Phospho-N-acetylmuramoyl-pentapeptide-transferase</fullName>
        <ecNumber evidence="1">2.7.8.13</ecNumber>
    </recommendedName>
    <alternativeName>
        <fullName evidence="1">UDP-MurNAc-pentapeptide phosphotransferase</fullName>
    </alternativeName>
</protein>
<proteinExistence type="inferred from homology"/>